<accession>P0AE79</accession>
<accession>P77392</accession>
<feature type="chain" id="PRO_0000088347" description="Magnesium and cobalt efflux protein CorC">
    <location>
        <begin position="1"/>
        <end position="292"/>
    </location>
</feature>
<feature type="domain" description="CBS 1" evidence="2">
    <location>
        <begin position="73"/>
        <end position="133"/>
    </location>
</feature>
<feature type="domain" description="CBS 2" evidence="2">
    <location>
        <begin position="135"/>
        <end position="195"/>
    </location>
</feature>
<reference key="1">
    <citation type="journal article" date="2002" name="Proc. Natl. Acad. Sci. U.S.A.">
        <title>Extensive mosaic structure revealed by the complete genome sequence of uropathogenic Escherichia coli.</title>
        <authorList>
            <person name="Welch R.A."/>
            <person name="Burland V."/>
            <person name="Plunkett G. III"/>
            <person name="Redford P."/>
            <person name="Roesch P."/>
            <person name="Rasko D."/>
            <person name="Buckles E.L."/>
            <person name="Liou S.-R."/>
            <person name="Boutin A."/>
            <person name="Hackett J."/>
            <person name="Stroud D."/>
            <person name="Mayhew G.F."/>
            <person name="Rose D.J."/>
            <person name="Zhou S."/>
            <person name="Schwartz D.C."/>
            <person name="Perna N.T."/>
            <person name="Mobley H.L.T."/>
            <person name="Donnenberg M.S."/>
            <person name="Blattner F.R."/>
        </authorList>
    </citation>
    <scope>NUCLEOTIDE SEQUENCE [LARGE SCALE GENOMIC DNA]</scope>
    <source>
        <strain>CFT073 / ATCC 700928 / UPEC</strain>
    </source>
</reference>
<proteinExistence type="inferred from homology"/>
<dbReference type="EMBL" id="AE014075">
    <property type="protein sequence ID" value="AAN79216.1"/>
    <property type="molecule type" value="Genomic_DNA"/>
</dbReference>
<dbReference type="RefSeq" id="WP_001278605.1">
    <property type="nucleotide sequence ID" value="NZ_CP051263.1"/>
</dbReference>
<dbReference type="SMR" id="P0AE79"/>
<dbReference type="STRING" id="199310.c0743"/>
<dbReference type="DNASU" id="1038236"/>
<dbReference type="GeneID" id="93776824"/>
<dbReference type="KEGG" id="ecc:c0743"/>
<dbReference type="eggNOG" id="COG4535">
    <property type="taxonomic scope" value="Bacteria"/>
</dbReference>
<dbReference type="HOGENOM" id="CLU_015237_3_0_6"/>
<dbReference type="BioCyc" id="ECOL199310:C0743-MONOMER"/>
<dbReference type="Proteomes" id="UP000001410">
    <property type="component" value="Chromosome"/>
</dbReference>
<dbReference type="GO" id="GO:0005886">
    <property type="term" value="C:plasma membrane"/>
    <property type="evidence" value="ECO:0007669"/>
    <property type="project" value="TreeGrafter"/>
</dbReference>
<dbReference type="GO" id="GO:0050660">
    <property type="term" value="F:flavin adenine dinucleotide binding"/>
    <property type="evidence" value="ECO:0007669"/>
    <property type="project" value="InterPro"/>
</dbReference>
<dbReference type="CDD" id="cd04590">
    <property type="entry name" value="CBS_pair_CorC_HlyC_assoc"/>
    <property type="match status" value="1"/>
</dbReference>
<dbReference type="FunFam" id="3.30.465.10:FF:000003">
    <property type="entry name" value="Magnesium and cobalt efflux protein corC"/>
    <property type="match status" value="1"/>
</dbReference>
<dbReference type="FunFam" id="3.10.580.10:FF:000002">
    <property type="entry name" value="Magnesium/cobalt efflux protein CorC"/>
    <property type="match status" value="1"/>
</dbReference>
<dbReference type="Gene3D" id="3.30.465.10">
    <property type="match status" value="1"/>
</dbReference>
<dbReference type="Gene3D" id="3.10.580.10">
    <property type="entry name" value="CBS-domain"/>
    <property type="match status" value="1"/>
</dbReference>
<dbReference type="InterPro" id="IPR000644">
    <property type="entry name" value="CBS_dom"/>
</dbReference>
<dbReference type="InterPro" id="IPR046342">
    <property type="entry name" value="CBS_dom_sf"/>
</dbReference>
<dbReference type="InterPro" id="IPR054115">
    <property type="entry name" value="CorC_N"/>
</dbReference>
<dbReference type="InterPro" id="IPR036318">
    <property type="entry name" value="FAD-bd_PCMH-like_sf"/>
</dbReference>
<dbReference type="InterPro" id="IPR016169">
    <property type="entry name" value="FAD-bd_PCMH_sub2"/>
</dbReference>
<dbReference type="InterPro" id="IPR044751">
    <property type="entry name" value="Ion_transp-like_CBS"/>
</dbReference>
<dbReference type="InterPro" id="IPR005170">
    <property type="entry name" value="Transptr-assoc_dom"/>
</dbReference>
<dbReference type="NCBIfam" id="NF011675">
    <property type="entry name" value="PRK15094.1"/>
    <property type="match status" value="1"/>
</dbReference>
<dbReference type="PANTHER" id="PTHR22777">
    <property type="entry name" value="HEMOLYSIN-RELATED"/>
    <property type="match status" value="1"/>
</dbReference>
<dbReference type="PANTHER" id="PTHR22777:SF27">
    <property type="entry name" value="MAGNESIUM AND COBALT EFFLUX PROTEIN CORC"/>
    <property type="match status" value="1"/>
</dbReference>
<dbReference type="Pfam" id="PF00571">
    <property type="entry name" value="CBS"/>
    <property type="match status" value="2"/>
</dbReference>
<dbReference type="Pfam" id="PF03471">
    <property type="entry name" value="CorC_HlyC"/>
    <property type="match status" value="1"/>
</dbReference>
<dbReference type="Pfam" id="PF21917">
    <property type="entry name" value="NMB0537_N"/>
    <property type="match status" value="1"/>
</dbReference>
<dbReference type="SMART" id="SM00116">
    <property type="entry name" value="CBS"/>
    <property type="match status" value="2"/>
</dbReference>
<dbReference type="SMART" id="SM01091">
    <property type="entry name" value="CorC_HlyC"/>
    <property type="match status" value="1"/>
</dbReference>
<dbReference type="SUPFAM" id="SSF54631">
    <property type="entry name" value="CBS-domain pair"/>
    <property type="match status" value="1"/>
</dbReference>
<dbReference type="SUPFAM" id="SSF56176">
    <property type="entry name" value="FAD-binding/transporter-associated domain-like"/>
    <property type="match status" value="1"/>
</dbReference>
<dbReference type="PROSITE" id="PS51371">
    <property type="entry name" value="CBS"/>
    <property type="match status" value="2"/>
</dbReference>
<evidence type="ECO:0000250" key="1"/>
<evidence type="ECO:0000255" key="2">
    <source>
        <dbReference type="PROSITE-ProRule" id="PRU00703"/>
    </source>
</evidence>
<evidence type="ECO:0000305" key="3"/>
<comment type="function">
    <text evidence="1">Plays a role in the transport of magnesium and cobalt ions.</text>
</comment>
<comment type="similarity">
    <text evidence="3">Belongs to the UPF0053 family.</text>
</comment>
<organism>
    <name type="scientific">Escherichia coli O6:H1 (strain CFT073 / ATCC 700928 / UPEC)</name>
    <dbReference type="NCBI Taxonomy" id="199310"/>
    <lineage>
        <taxon>Bacteria</taxon>
        <taxon>Pseudomonadati</taxon>
        <taxon>Pseudomonadota</taxon>
        <taxon>Gammaproteobacteria</taxon>
        <taxon>Enterobacterales</taxon>
        <taxon>Enterobacteriaceae</taxon>
        <taxon>Escherichia</taxon>
    </lineage>
</organism>
<protein>
    <recommendedName>
        <fullName>Magnesium and cobalt efflux protein CorC</fullName>
    </recommendedName>
</protein>
<sequence length="292" mass="33298">MSDDNSHSSDTISNKKGFFSLLLSQLFHGEPKNRDELLALIRDSGQNDLIDEDTRDMLEGVMDIADQRVRDIMIPRSQMITLKRNQTLDECLDVIIESAHSRFPVISEDKDHIEGILMAKDLLPFMRSDAEAFSMDKVLRQAVVVPESKRVDRMLKEFRSQRYHMAIVIDEFGGVSGLVTIEDILELIVGEIEDEYDEEDDIDFRQLSRHTWTVRALASIEDFNEAFGTHFSDEEVDTIGGLVMQAFGHLPARGETIDIDGYQFKVAMADSRRIIQVHVKIPDDSPQPKLDE</sequence>
<name>CORC_ECOL6</name>
<gene>
    <name type="primary">corC</name>
    <name type="ordered locus">c0743</name>
</gene>
<keyword id="KW-0129">CBS domain</keyword>
<keyword id="KW-0170">Cobalt</keyword>
<keyword id="KW-0460">Magnesium</keyword>
<keyword id="KW-1185">Reference proteome</keyword>
<keyword id="KW-0677">Repeat</keyword>
<keyword id="KW-0813">Transport</keyword>